<gene>
    <name type="primary">GSTA4</name>
</gene>
<comment type="function">
    <text evidence="1">Conjugation of reduced glutathione to a wide number of exogenous and endogenous hydrophobic electrophiles.</text>
</comment>
<comment type="catalytic activity">
    <reaction>
        <text>RX + glutathione = an S-substituted glutathione + a halide anion + H(+)</text>
        <dbReference type="Rhea" id="RHEA:16437"/>
        <dbReference type="ChEBI" id="CHEBI:15378"/>
        <dbReference type="ChEBI" id="CHEBI:16042"/>
        <dbReference type="ChEBI" id="CHEBI:17792"/>
        <dbReference type="ChEBI" id="CHEBI:57925"/>
        <dbReference type="ChEBI" id="CHEBI:90779"/>
        <dbReference type="EC" id="2.5.1.18"/>
    </reaction>
</comment>
<comment type="subunit">
    <text evidence="1">Homodimer.</text>
</comment>
<comment type="subcellular location">
    <subcellularLocation>
        <location evidence="1">Cytoplasm</location>
    </subcellularLocation>
</comment>
<comment type="similarity">
    <text evidence="5">Belongs to the GST superfamily. Alpha family.</text>
</comment>
<reference key="1">
    <citation type="journal article" date="2005" name="BMC Genomics">
        <title>Characterization of 954 bovine full-CDS cDNA sequences.</title>
        <authorList>
            <person name="Harhay G.P."/>
            <person name="Sonstegard T.S."/>
            <person name="Keele J.W."/>
            <person name="Heaton M.P."/>
            <person name="Clawson M.L."/>
            <person name="Snelling W.M."/>
            <person name="Wiedmann R.T."/>
            <person name="Van Tassell C.P."/>
            <person name="Smith T.P.L."/>
        </authorList>
    </citation>
    <scope>NUCLEOTIDE SEQUENCE [LARGE SCALE MRNA]</scope>
</reference>
<protein>
    <recommendedName>
        <fullName>Glutathione S-transferase A4</fullName>
        <ecNumber>2.5.1.18</ecNumber>
    </recommendedName>
    <alternativeName>
        <fullName>GST class-alpha member 4</fullName>
    </alternativeName>
    <alternativeName>
        <fullName>Glutathione S-transferase alpha-4</fullName>
    </alternativeName>
</protein>
<proteinExistence type="evidence at transcript level"/>
<dbReference type="EC" id="2.5.1.18"/>
<dbReference type="EMBL" id="BT020960">
    <property type="protein sequence ID" value="AAX08977.1"/>
    <property type="molecule type" value="mRNA"/>
</dbReference>
<dbReference type="RefSeq" id="NP_001015651.1">
    <property type="nucleotide sequence ID" value="NM_001015651.1"/>
</dbReference>
<dbReference type="SMR" id="Q5E9G0"/>
<dbReference type="FunCoup" id="Q5E9G0">
    <property type="interactions" value="149"/>
</dbReference>
<dbReference type="STRING" id="9913.ENSBTAP00000063570"/>
<dbReference type="PaxDb" id="9913-ENSBTAP00000028640"/>
<dbReference type="Ensembl" id="ENSBTAT00000028640.6">
    <property type="protein sequence ID" value="ENSBTAP00000028640.4"/>
    <property type="gene ID" value="ENSBTAG00000004288.7"/>
</dbReference>
<dbReference type="GeneID" id="533917"/>
<dbReference type="KEGG" id="bta:533917"/>
<dbReference type="CTD" id="2941"/>
<dbReference type="VEuPathDB" id="HostDB:ENSBTAG00000004288"/>
<dbReference type="VGNC" id="VGNC:53979">
    <property type="gene designation" value="GSTA4"/>
</dbReference>
<dbReference type="eggNOG" id="KOG1695">
    <property type="taxonomic scope" value="Eukaryota"/>
</dbReference>
<dbReference type="GeneTree" id="ENSGT00940000162778"/>
<dbReference type="HOGENOM" id="CLU_039475_4_0_1"/>
<dbReference type="InParanoid" id="Q5E9G0"/>
<dbReference type="OMA" id="TVYNVFM"/>
<dbReference type="OrthoDB" id="414243at2759"/>
<dbReference type="TreeFam" id="TF105321"/>
<dbReference type="Reactome" id="R-BTA-156590">
    <property type="pathway name" value="Glutathione conjugation"/>
</dbReference>
<dbReference type="Proteomes" id="UP000009136">
    <property type="component" value="Chromosome 23"/>
</dbReference>
<dbReference type="Bgee" id="ENSBTAG00000004288">
    <property type="expression patterns" value="Expressed in pituitary gland and 106 other cell types or tissues"/>
</dbReference>
<dbReference type="GO" id="GO:0005737">
    <property type="term" value="C:cytoplasm"/>
    <property type="evidence" value="ECO:0007669"/>
    <property type="project" value="UniProtKB-SubCell"/>
</dbReference>
<dbReference type="GO" id="GO:0004364">
    <property type="term" value="F:glutathione transferase activity"/>
    <property type="evidence" value="ECO:0000250"/>
    <property type="project" value="UniProtKB"/>
</dbReference>
<dbReference type="GO" id="GO:0006749">
    <property type="term" value="P:glutathione metabolic process"/>
    <property type="evidence" value="ECO:0000250"/>
    <property type="project" value="UniProtKB"/>
</dbReference>
<dbReference type="GO" id="GO:0006805">
    <property type="term" value="P:xenobiotic metabolic process"/>
    <property type="evidence" value="ECO:0000318"/>
    <property type="project" value="GO_Central"/>
</dbReference>
<dbReference type="CDD" id="cd03208">
    <property type="entry name" value="GST_C_Alpha"/>
    <property type="match status" value="1"/>
</dbReference>
<dbReference type="FunFam" id="1.20.1050.10:FF:000005">
    <property type="entry name" value="Glutathione S-transferase A1"/>
    <property type="match status" value="1"/>
</dbReference>
<dbReference type="Gene3D" id="1.20.1050.10">
    <property type="match status" value="1"/>
</dbReference>
<dbReference type="Gene3D" id="3.40.30.10">
    <property type="entry name" value="Glutaredoxin"/>
    <property type="match status" value="1"/>
</dbReference>
<dbReference type="InterPro" id="IPR010987">
    <property type="entry name" value="Glutathione-S-Trfase_C-like"/>
</dbReference>
<dbReference type="InterPro" id="IPR036282">
    <property type="entry name" value="Glutathione-S-Trfase_C_sf"/>
</dbReference>
<dbReference type="InterPro" id="IPR004045">
    <property type="entry name" value="Glutathione_S-Trfase_N"/>
</dbReference>
<dbReference type="InterPro" id="IPR003080">
    <property type="entry name" value="GST_alpha"/>
</dbReference>
<dbReference type="InterPro" id="IPR004046">
    <property type="entry name" value="GST_C"/>
</dbReference>
<dbReference type="InterPro" id="IPR050213">
    <property type="entry name" value="GST_superfamily"/>
</dbReference>
<dbReference type="InterPro" id="IPR036249">
    <property type="entry name" value="Thioredoxin-like_sf"/>
</dbReference>
<dbReference type="PANTHER" id="PTHR11571">
    <property type="entry name" value="GLUTATHIONE S-TRANSFERASE"/>
    <property type="match status" value="1"/>
</dbReference>
<dbReference type="PANTHER" id="PTHR11571:SF123">
    <property type="entry name" value="GLUTATHIONE S-TRANSFERASE A4"/>
    <property type="match status" value="1"/>
</dbReference>
<dbReference type="Pfam" id="PF14497">
    <property type="entry name" value="GST_C_3"/>
    <property type="match status" value="1"/>
</dbReference>
<dbReference type="Pfam" id="PF02798">
    <property type="entry name" value="GST_N"/>
    <property type="match status" value="1"/>
</dbReference>
<dbReference type="PRINTS" id="PR01266">
    <property type="entry name" value="GSTRNSFRASEA"/>
</dbReference>
<dbReference type="SFLD" id="SFLDG01205">
    <property type="entry name" value="AMPS.1"/>
    <property type="match status" value="1"/>
</dbReference>
<dbReference type="SFLD" id="SFLDG00363">
    <property type="entry name" value="AMPS_(cytGST):_Alpha-__Mu-__Pi"/>
    <property type="match status" value="1"/>
</dbReference>
<dbReference type="SUPFAM" id="SSF47616">
    <property type="entry name" value="GST C-terminal domain-like"/>
    <property type="match status" value="1"/>
</dbReference>
<dbReference type="SUPFAM" id="SSF52833">
    <property type="entry name" value="Thioredoxin-like"/>
    <property type="match status" value="1"/>
</dbReference>
<dbReference type="PROSITE" id="PS50405">
    <property type="entry name" value="GST_CTER"/>
    <property type="match status" value="1"/>
</dbReference>
<dbReference type="PROSITE" id="PS50404">
    <property type="entry name" value="GST_NTER"/>
    <property type="match status" value="1"/>
</dbReference>
<keyword id="KW-0007">Acetylation</keyword>
<keyword id="KW-0963">Cytoplasm</keyword>
<keyword id="KW-1185">Reference proteome</keyword>
<keyword id="KW-0808">Transferase</keyword>
<feature type="chain" id="PRO_0000249771" description="Glutathione S-transferase A4">
    <location>
        <begin position="1"/>
        <end position="222"/>
    </location>
</feature>
<feature type="domain" description="GST N-terminal">
    <location>
        <begin position="3"/>
        <end position="83"/>
    </location>
</feature>
<feature type="domain" description="GST C-terminal">
    <location>
        <begin position="85"/>
        <end position="208"/>
    </location>
</feature>
<feature type="binding site" evidence="2">
    <location>
        <position position="9"/>
    </location>
    <ligand>
        <name>glutathione</name>
        <dbReference type="ChEBI" id="CHEBI:57925"/>
    </ligand>
</feature>
<feature type="binding site" evidence="4">
    <location>
        <begin position="54"/>
        <end position="55"/>
    </location>
    <ligand>
        <name>glutathione</name>
        <dbReference type="ChEBI" id="CHEBI:57925"/>
    </ligand>
</feature>
<feature type="binding site" evidence="2">
    <location>
        <begin position="67"/>
        <end position="68"/>
    </location>
    <ligand>
        <name>glutathione</name>
        <dbReference type="ChEBI" id="CHEBI:57925"/>
    </ligand>
</feature>
<feature type="modified residue" description="N-acetylmethionine" evidence="3">
    <location>
        <position position="1"/>
    </location>
</feature>
<name>GSTA4_BOVIN</name>
<evidence type="ECO:0000250" key="1"/>
<evidence type="ECO:0000250" key="2">
    <source>
        <dbReference type="UniProtKB" id="P13745"/>
    </source>
</evidence>
<evidence type="ECO:0000250" key="3">
    <source>
        <dbReference type="UniProtKB" id="P14942"/>
    </source>
</evidence>
<evidence type="ECO:0000250" key="4">
    <source>
        <dbReference type="UniProtKB" id="P30711"/>
    </source>
</evidence>
<evidence type="ECO:0000305" key="5"/>
<sequence length="222" mass="25659">MATKPKLHYPNGRGRMESVRWVLAAAGVEFDEEFLETKEQLQKLQDGNHLLFQQVPMVEIDGMKLVQTRSILHYIADKHHLFGKDLKERTLIDMYVEGTLDLLELLIMHPFLKPDDQQKEVANMAQKAIIRYFPVFEKVLRGHGQRFLVGNQLSLADIILLQTILALEEKIPNILSAFPHLQEYTVKISNIPTIKKFLEPGSKKKPPPDDIYVRTVYNIFMP</sequence>
<organism>
    <name type="scientific">Bos taurus</name>
    <name type="common">Bovine</name>
    <dbReference type="NCBI Taxonomy" id="9913"/>
    <lineage>
        <taxon>Eukaryota</taxon>
        <taxon>Metazoa</taxon>
        <taxon>Chordata</taxon>
        <taxon>Craniata</taxon>
        <taxon>Vertebrata</taxon>
        <taxon>Euteleostomi</taxon>
        <taxon>Mammalia</taxon>
        <taxon>Eutheria</taxon>
        <taxon>Laurasiatheria</taxon>
        <taxon>Artiodactyla</taxon>
        <taxon>Ruminantia</taxon>
        <taxon>Pecora</taxon>
        <taxon>Bovidae</taxon>
        <taxon>Bovinae</taxon>
        <taxon>Bos</taxon>
    </lineage>
</organism>
<accession>Q5E9G0</accession>